<dbReference type="EMBL" id="AY063765">
    <property type="protein sequence ID" value="AAL48320.1"/>
    <property type="molecule type" value="mRNA"/>
</dbReference>
<dbReference type="BMRB" id="Q8WMS3"/>
<dbReference type="FunCoup" id="Q8WMS3">
    <property type="interactions" value="3"/>
</dbReference>
<dbReference type="InParanoid" id="Q8WMS3"/>
<dbReference type="OrthoDB" id="9940275at2759"/>
<dbReference type="Proteomes" id="UP000002254">
    <property type="component" value="Unplaced"/>
</dbReference>
<dbReference type="Proteomes" id="UP000694429">
    <property type="component" value="Unplaced"/>
</dbReference>
<dbReference type="Proteomes" id="UP000694542">
    <property type="component" value="Unplaced"/>
</dbReference>
<dbReference type="Proteomes" id="UP000805418">
    <property type="component" value="Unplaced"/>
</dbReference>
<dbReference type="GO" id="GO:0005737">
    <property type="term" value="C:cytoplasm"/>
    <property type="evidence" value="ECO:0000318"/>
    <property type="project" value="GO_Central"/>
</dbReference>
<dbReference type="GO" id="GO:0004864">
    <property type="term" value="F:protein phosphatase inhibitor activity"/>
    <property type="evidence" value="ECO:0007669"/>
    <property type="project" value="UniProtKB-KW"/>
</dbReference>
<dbReference type="GO" id="GO:0005977">
    <property type="term" value="P:glycogen metabolic process"/>
    <property type="evidence" value="ECO:0007669"/>
    <property type="project" value="UniProtKB-KW"/>
</dbReference>
<dbReference type="GO" id="GO:0035556">
    <property type="term" value="P:intracellular signal transduction"/>
    <property type="evidence" value="ECO:0000318"/>
    <property type="project" value="GO_Central"/>
</dbReference>
<dbReference type="InterPro" id="IPR008466">
    <property type="entry name" value="PPP1R1A/B/C"/>
</dbReference>
<dbReference type="PANTHER" id="PTHR15417:SF4">
    <property type="entry name" value="PROTEIN PHOSPHATASE 1 REGULATORY SUBUNIT 1A"/>
    <property type="match status" value="1"/>
</dbReference>
<dbReference type="PANTHER" id="PTHR15417">
    <property type="entry name" value="PROTEIN PHOSPHATASE INHIBITOR AND DOPAMINE- AND CAMP-REGULATED NEURONAL PHOSPHOPROTEIN"/>
    <property type="match status" value="1"/>
</dbReference>
<dbReference type="Pfam" id="PF05395">
    <property type="entry name" value="DARPP-32"/>
    <property type="match status" value="1"/>
</dbReference>
<evidence type="ECO:0000250" key="1"/>
<evidence type="ECO:0000250" key="2">
    <source>
        <dbReference type="UniProtKB" id="P01099"/>
    </source>
</evidence>
<evidence type="ECO:0000250" key="3">
    <source>
        <dbReference type="UniProtKB" id="Q13522"/>
    </source>
</evidence>
<evidence type="ECO:0000250" key="4">
    <source>
        <dbReference type="UniProtKB" id="Q9ERT9"/>
    </source>
</evidence>
<evidence type="ECO:0000256" key="5">
    <source>
        <dbReference type="SAM" id="MobiDB-lite"/>
    </source>
</evidence>
<evidence type="ECO:0000305" key="6"/>
<gene>
    <name type="primary">PPP1R1A</name>
</gene>
<accession>Q8WMS3</accession>
<name>PPR1A_CANLF</name>
<proteinExistence type="evidence at transcript level"/>
<protein>
    <recommendedName>
        <fullName>Protein phosphatase 1 regulatory subunit 1A</fullName>
    </recommendedName>
    <alternativeName>
        <fullName>Protein phosphatase inhibitor 1</fullName>
        <shortName>I-1</shortName>
        <shortName>IPP-1</shortName>
    </alternativeName>
</protein>
<comment type="function">
    <text evidence="1">Inhibitor of protein-phosphatase 1. This protein may be important in hormonal control of glycogen metabolism. Hormones that elevate intracellular cAMP increase I-1 activity in many tissues. I-1 activation may impose cAMP control over proteins that are not directly phosphorylated by PKA. Following a rise in intracellular calcium, I-1 is inactivated by calcineurin (or PP2B). Does not inhibit type-2 phosphatases (By similarity).</text>
</comment>
<comment type="subunit">
    <text evidence="1">Interacts with PPP1R15A.</text>
</comment>
<comment type="PTM">
    <text evidence="1">Phosphorylation of Thr-35 is required for activity.</text>
</comment>
<comment type="similarity">
    <text evidence="6">Belongs to the protein phosphatase inhibitor 1 family.</text>
</comment>
<sequence length="171" mass="18999">MEQDNSPRKIQFTVPLLEPHLDPEAAEQIRRRRPTPATLVLTSDQSSPEIDEDRIPNPHLKSTLAMSPRQRKKMTRITPTMKELQMMVEHHLGQQQQGEEPEGAAESTGTQESRPPGIPDTEVESRLGTSGTAKKTAECIPKTHERGSKEPSTKEPSTHIPPLDSKGANFV</sequence>
<feature type="chain" id="PRO_0000071476" description="Protein phosphatase 1 regulatory subunit 1A">
    <location>
        <begin position="1"/>
        <end position="171"/>
    </location>
</feature>
<feature type="region of interest" description="Disordered" evidence="5">
    <location>
        <begin position="1"/>
        <end position="171"/>
    </location>
</feature>
<feature type="region of interest" description="Essential for activity">
    <location>
        <begin position="9"/>
        <end position="12"/>
    </location>
</feature>
<feature type="region of interest" description="Essential for activity" evidence="6">
    <location>
        <begin position="42"/>
        <end position="54"/>
    </location>
</feature>
<feature type="region of interest" description="Interaction with PPP1R15A" evidence="1">
    <location>
        <begin position="143"/>
        <end position="171"/>
    </location>
</feature>
<feature type="compositionally biased region" description="Basic and acidic residues" evidence="5">
    <location>
        <begin position="19"/>
        <end position="29"/>
    </location>
</feature>
<feature type="compositionally biased region" description="Basic and acidic residues" evidence="5">
    <location>
        <begin position="135"/>
        <end position="157"/>
    </location>
</feature>
<feature type="modified residue" description="N-acetylmethionine" evidence="2">
    <location>
        <position position="1"/>
    </location>
</feature>
<feature type="modified residue" description="Phosphothreonine; by PKA" evidence="3">
    <location>
        <position position="35"/>
    </location>
</feature>
<feature type="modified residue" description="Phosphoserine" evidence="4">
    <location>
        <position position="43"/>
    </location>
</feature>
<feature type="modified residue" description="Phosphoserine" evidence="4">
    <location>
        <position position="46"/>
    </location>
</feature>
<feature type="modified residue" description="Phosphoserine" evidence="4">
    <location>
        <position position="47"/>
    </location>
</feature>
<feature type="modified residue" description="Phosphoserine" evidence="3">
    <location>
        <position position="67"/>
    </location>
</feature>
<organism>
    <name type="scientific">Canis lupus familiaris</name>
    <name type="common">Dog</name>
    <name type="synonym">Canis familiaris</name>
    <dbReference type="NCBI Taxonomy" id="9615"/>
    <lineage>
        <taxon>Eukaryota</taxon>
        <taxon>Metazoa</taxon>
        <taxon>Chordata</taxon>
        <taxon>Craniata</taxon>
        <taxon>Vertebrata</taxon>
        <taxon>Euteleostomi</taxon>
        <taxon>Mammalia</taxon>
        <taxon>Eutheria</taxon>
        <taxon>Laurasiatheria</taxon>
        <taxon>Carnivora</taxon>
        <taxon>Caniformia</taxon>
        <taxon>Canidae</taxon>
        <taxon>Canis</taxon>
    </lineage>
</organism>
<keyword id="KW-0007">Acetylation</keyword>
<keyword id="KW-0119">Carbohydrate metabolism</keyword>
<keyword id="KW-0321">Glycogen metabolism</keyword>
<keyword id="KW-0597">Phosphoprotein</keyword>
<keyword id="KW-0650">Protein phosphatase inhibitor</keyword>
<keyword id="KW-1185">Reference proteome</keyword>
<reference key="1">
    <citation type="submission" date="2001-11" db="EMBL/GenBank/DDBJ databases">
        <title>Cloning of inhibitor-1 of protein phosphatase type 1 from adult dog heart.</title>
        <authorList>
            <person name="Mishra S."/>
            <person name="Tiwari N."/>
            <person name="Sabbah H.N."/>
            <person name="Gupta R.C."/>
        </authorList>
    </citation>
    <scope>NUCLEOTIDE SEQUENCE [MRNA]</scope>
    <source>
        <tissue>Heart</tissue>
    </source>
</reference>